<proteinExistence type="evidence at transcript level"/>
<sequence length="1115" mass="125866">MATMSGTTIVCLIYLTTMLGNSQGVNLKIESPSPPTLCSVEGTFHCDDGMLQCVLMGSKCDGVSDCENGMDESVETCGCLQSEFQCNHTTCIDKILRCDRNDDCSNGLDERECDIYICPLGTHVKWHNHFCVPRDKQCDFLDDCGDNSDEKICERRECVATEFKCNNSQCVAFGNLCDGLVDCVDGSDEDQVACDSDKYFQCAEGSLIKKEFVCDGWVDCKLTFADELNCKLCDEDDFRCSDTRCIQKSNVCDGYCDCKTCDDEEVCANNTYGCPMDTKYMCRSIYGEPRCIDKDNVCNMINDCRDGNVGTDEYYCSNDSECKNFQAAMGFFYCPEERCLAKHLYCDLHPDCINGEDEQSCLAPPKCSQDEFQCHHGKCIPISKRCDSVHDCVDWSDEMNCENHQCAANMKSCLSGHCIEEHKWCNFHRECPDGSDEKDCDPRPVCEANQFRCKNGQCIDPLQVCVKGDKYDGCADQSHLINCSQHICLEGQFRCRKSFCINQTKVCDGTVDCLQGMWDENNCRYWCPHGQAICQCEGVTMDCTGQKLKEMPVQQMEEDLSKLMIGDNLLNLTSTTFSATYYDKVTYLDLSRNHLTEIPIYSFQNMWKLTHLNLADNNITSLKNGSLLGLSNLKQLHINGNKIETIEEDTFSSMIHLTVLDLSNQRLTHVYKNMFKGLKQITVLNISRNQINSIDNGAFNNLANVRLIDLSGNVIKDIGQKVFMGLPRLVELKTDSYRFCCLAPEGVKCSPKQDEFSSCEDLMSNHVLRVSIWVLGVIALVGNFVVIFWRVRDFRGGKVHSFLITNLAIGDFLMGVYLLIIATADTYYRGVYISHDENWKQSGLCQFAGFVSTFSSELSVLTLSTITLDRLICILFPLRRTRLGLRQAIIVMSCIWVLVFLLAVLPLLGFSYFENFYGRSGVCLALHVTPDRRPGWEYSVGVFILLNLLSFVLIASSYLWMFSVAKKTRSAVRTAESKNDNAMARRMTLIVMTDFCCWVPIIVLGFVSLAGARADDQVYAWIAVFVLPLNSATNPVIYTLSTAPFLGNVRKRANRFRKSFIHSFTGDTKHSYVDDGTTHSYCEKKSPYRQLELKRLRSLNSSPPMYYNTELHSDS</sequence>
<feature type="signal peptide" evidence="2">
    <location>
        <begin position="1"/>
        <end position="24"/>
    </location>
</feature>
<feature type="chain" id="PRO_0000012791" description="G-protein coupled receptor GRL101">
    <location>
        <begin position="25"/>
        <end position="1115"/>
    </location>
</feature>
<feature type="topological domain" description="Extracellular" evidence="2">
    <location>
        <begin position="25"/>
        <end position="767"/>
    </location>
</feature>
<feature type="transmembrane region" description="Helical; Name=1" evidence="2">
    <location>
        <begin position="768"/>
        <end position="788"/>
    </location>
</feature>
<feature type="topological domain" description="Cytoplasmic" evidence="2">
    <location>
        <begin position="789"/>
        <end position="801"/>
    </location>
</feature>
<feature type="transmembrane region" description="Helical; Name=2" evidence="2">
    <location>
        <begin position="802"/>
        <end position="822"/>
    </location>
</feature>
<feature type="topological domain" description="Extracellular" evidence="2">
    <location>
        <begin position="823"/>
        <end position="857"/>
    </location>
</feature>
<feature type="transmembrane region" description="Helical; Name=3" evidence="2">
    <location>
        <begin position="858"/>
        <end position="878"/>
    </location>
</feature>
<feature type="topological domain" description="Cytoplasmic" evidence="2">
    <location>
        <begin position="879"/>
        <end position="887"/>
    </location>
</feature>
<feature type="transmembrane region" description="Helical; Name=4" evidence="2">
    <location>
        <begin position="888"/>
        <end position="908"/>
    </location>
</feature>
<feature type="topological domain" description="Extracellular" evidence="2">
    <location>
        <begin position="909"/>
        <end position="941"/>
    </location>
</feature>
<feature type="transmembrane region" description="Helical; Name=5" evidence="2">
    <location>
        <begin position="942"/>
        <end position="962"/>
    </location>
</feature>
<feature type="topological domain" description="Cytoplasmic" evidence="2">
    <location>
        <begin position="963"/>
        <end position="988"/>
    </location>
</feature>
<feature type="transmembrane region" description="Helical; Name=6" evidence="2">
    <location>
        <begin position="989"/>
        <end position="1009"/>
    </location>
</feature>
<feature type="topological domain" description="Extracellular" evidence="2">
    <location>
        <begin position="1010"/>
        <end position="1017"/>
    </location>
</feature>
<feature type="transmembrane region" description="Helical; Name=7" evidence="2">
    <location>
        <begin position="1018"/>
        <end position="1038"/>
    </location>
</feature>
<feature type="topological domain" description="Cytoplasmic" evidence="2">
    <location>
        <begin position="1039"/>
        <end position="1115"/>
    </location>
</feature>
<feature type="domain" description="LDL-receptor class A 1" evidence="3">
    <location>
        <begin position="36"/>
        <end position="79"/>
    </location>
</feature>
<feature type="domain" description="LDL-receptor class A 2" evidence="3">
    <location>
        <begin position="77"/>
        <end position="115"/>
    </location>
</feature>
<feature type="domain" description="LDL-receptor class A 3" evidence="3">
    <location>
        <begin position="116"/>
        <end position="155"/>
    </location>
</feature>
<feature type="domain" description="LDL-receptor class A 4" evidence="3">
    <location>
        <begin position="156"/>
        <end position="196"/>
    </location>
</feature>
<feature type="domain" description="LDL-receptor class A 5" evidence="3">
    <location>
        <begin position="195"/>
        <end position="232"/>
    </location>
</feature>
<feature type="domain" description="LDL-receptor class A 6" evidence="3">
    <location>
        <begin position="231"/>
        <end position="269"/>
    </location>
</feature>
<feature type="domain" description="LDL-receptor class A 7" evidence="3">
    <location>
        <begin position="272"/>
        <end position="318"/>
    </location>
</feature>
<feature type="domain" description="LDL-receptor class A 8" evidence="3">
    <location>
        <begin position="320"/>
        <end position="363"/>
    </location>
</feature>
<feature type="domain" description="LDL-receptor class A 9" evidence="3">
    <location>
        <begin position="365"/>
        <end position="403"/>
    </location>
</feature>
<feature type="domain" description="LDL-receptor class A 10" evidence="3">
    <location>
        <begin position="404"/>
        <end position="442"/>
    </location>
</feature>
<feature type="domain" description="LDL-receptor class A 11" evidence="3">
    <location>
        <begin position="444"/>
        <end position="485"/>
    </location>
</feature>
<feature type="domain" description="LDL-receptor class A 12" evidence="3">
    <location>
        <begin position="486"/>
        <end position="525"/>
    </location>
</feature>
<feature type="domain" description="LRRNT">
    <location>
        <begin position="518"/>
        <end position="562"/>
    </location>
</feature>
<feature type="repeat" description="LRR 1">
    <location>
        <begin position="584"/>
        <end position="605"/>
    </location>
</feature>
<feature type="repeat" description="LRR 2">
    <location>
        <begin position="608"/>
        <end position="629"/>
    </location>
</feature>
<feature type="repeat" description="LRR 3">
    <location>
        <begin position="632"/>
        <end position="653"/>
    </location>
</feature>
<feature type="repeat" description="LRR 4">
    <location>
        <begin position="656"/>
        <end position="677"/>
    </location>
</feature>
<feature type="repeat" description="LRR 5">
    <location>
        <begin position="680"/>
        <end position="701"/>
    </location>
</feature>
<feature type="repeat" description="LRR 6">
    <location>
        <begin position="704"/>
        <end position="725"/>
    </location>
</feature>
<feature type="glycosylation site" description="N-linked (GlcNAc...) asparagine" evidence="2">
    <location>
        <position position="87"/>
    </location>
</feature>
<feature type="glycosylation site" description="N-linked (GlcNAc...) asparagine" evidence="2">
    <location>
        <position position="166"/>
    </location>
</feature>
<feature type="glycosylation site" description="N-linked (GlcNAc...) asparagine" evidence="2">
    <location>
        <position position="269"/>
    </location>
</feature>
<feature type="glycosylation site" description="N-linked (GlcNAc...) asparagine" evidence="2">
    <location>
        <position position="318"/>
    </location>
</feature>
<feature type="glycosylation site" description="N-linked (GlcNAc...) asparagine" evidence="2">
    <location>
        <position position="482"/>
    </location>
</feature>
<feature type="glycosylation site" description="N-linked (GlcNAc...) asparagine" evidence="2">
    <location>
        <position position="502"/>
    </location>
</feature>
<feature type="glycosylation site" description="N-linked (GlcNAc...) asparagine" evidence="2">
    <location>
        <position position="571"/>
    </location>
</feature>
<feature type="glycosylation site" description="N-linked (GlcNAc...) asparagine" evidence="2">
    <location>
        <position position="618"/>
    </location>
</feature>
<feature type="glycosylation site" description="N-linked (GlcNAc...) asparagine" evidence="2">
    <location>
        <position position="624"/>
    </location>
</feature>
<feature type="glycosylation site" description="N-linked (GlcNAc...) asparagine" evidence="2">
    <location>
        <position position="685"/>
    </location>
</feature>
<feature type="disulfide bond" evidence="1">
    <location>
        <begin position="38"/>
        <end position="53"/>
    </location>
</feature>
<feature type="disulfide bond" evidence="1">
    <location>
        <begin position="46"/>
        <end position="66"/>
    </location>
</feature>
<feature type="disulfide bond" evidence="1">
    <location>
        <begin position="60"/>
        <end position="77"/>
    </location>
</feature>
<feature type="disulfide bond" evidence="1">
    <location>
        <begin position="79"/>
        <end position="91"/>
    </location>
</feature>
<feature type="disulfide bond" evidence="1">
    <location>
        <begin position="86"/>
        <end position="104"/>
    </location>
</feature>
<feature type="disulfide bond" evidence="1">
    <location>
        <begin position="98"/>
        <end position="113"/>
    </location>
</feature>
<feature type="disulfide bond" evidence="1">
    <location>
        <begin position="118"/>
        <end position="131"/>
    </location>
</feature>
<feature type="disulfide bond" evidence="1">
    <location>
        <begin position="138"/>
        <end position="153"/>
    </location>
</feature>
<feature type="disulfide bond" evidence="1">
    <location>
        <begin position="158"/>
        <end position="170"/>
    </location>
</feature>
<feature type="disulfide bond" evidence="1">
    <location>
        <begin position="165"/>
        <end position="183"/>
    </location>
</feature>
<feature type="disulfide bond" evidence="1">
    <location>
        <begin position="177"/>
        <end position="194"/>
    </location>
</feature>
<feature type="disulfide bond" evidence="1">
    <location>
        <begin position="202"/>
        <end position="220"/>
    </location>
</feature>
<feature type="disulfide bond" evidence="1">
    <location>
        <begin position="214"/>
        <end position="230"/>
    </location>
</feature>
<feature type="disulfide bond" evidence="1">
    <location>
        <begin position="233"/>
        <end position="245"/>
    </location>
</feature>
<feature type="disulfide bond" evidence="1">
    <location>
        <begin position="240"/>
        <end position="258"/>
    </location>
</feature>
<feature type="disulfide bond" evidence="1">
    <location>
        <begin position="252"/>
        <end position="267"/>
    </location>
</feature>
<feature type="disulfide bond" evidence="1">
    <location>
        <begin position="274"/>
        <end position="291"/>
    </location>
</feature>
<feature type="disulfide bond" evidence="1">
    <location>
        <begin position="282"/>
        <end position="304"/>
    </location>
</feature>
<feature type="disulfide bond" evidence="1">
    <location>
        <begin position="298"/>
        <end position="316"/>
    </location>
</feature>
<feature type="disulfide bond" evidence="1">
    <location>
        <begin position="322"/>
        <end position="339"/>
    </location>
</feature>
<feature type="disulfide bond" evidence="1">
    <location>
        <begin position="334"/>
        <end position="352"/>
    </location>
</feature>
<feature type="disulfide bond" evidence="1">
    <location>
        <begin position="346"/>
        <end position="361"/>
    </location>
</feature>
<feature type="disulfide bond" evidence="1">
    <location>
        <begin position="367"/>
        <end position="379"/>
    </location>
</feature>
<feature type="disulfide bond" evidence="1">
    <location>
        <begin position="374"/>
        <end position="392"/>
    </location>
</feature>
<feature type="disulfide bond" evidence="1">
    <location>
        <begin position="386"/>
        <end position="401"/>
    </location>
</feature>
<feature type="disulfide bond" evidence="1">
    <location>
        <begin position="406"/>
        <end position="418"/>
    </location>
</feature>
<feature type="disulfide bond" evidence="1">
    <location>
        <begin position="413"/>
        <end position="431"/>
    </location>
</feature>
<feature type="disulfide bond" evidence="1">
    <location>
        <begin position="425"/>
        <end position="440"/>
    </location>
</feature>
<feature type="disulfide bond" evidence="1">
    <location>
        <begin position="446"/>
        <end position="458"/>
    </location>
</feature>
<feature type="disulfide bond" evidence="1">
    <location>
        <begin position="453"/>
        <end position="474"/>
    </location>
</feature>
<feature type="disulfide bond" evidence="1">
    <location>
        <begin position="465"/>
        <end position="483"/>
    </location>
</feature>
<feature type="disulfide bond" evidence="1">
    <location>
        <begin position="488"/>
        <end position="500"/>
    </location>
</feature>
<feature type="disulfide bond" evidence="1">
    <location>
        <begin position="495"/>
        <end position="513"/>
    </location>
</feature>
<feature type="disulfide bond" evidence="1">
    <location>
        <begin position="507"/>
        <end position="523"/>
    </location>
</feature>
<dbReference type="EMBL" id="Z23104">
    <property type="protein sequence ID" value="CAA80651.1"/>
    <property type="molecule type" value="mRNA"/>
</dbReference>
<dbReference type="PIR" id="S40241">
    <property type="entry name" value="S40241"/>
</dbReference>
<dbReference type="SMR" id="P46023"/>
<dbReference type="GO" id="GO:0005886">
    <property type="term" value="C:plasma membrane"/>
    <property type="evidence" value="ECO:0007669"/>
    <property type="project" value="UniProtKB-SubCell"/>
</dbReference>
<dbReference type="GO" id="GO:0008528">
    <property type="term" value="F:G protein-coupled peptide receptor activity"/>
    <property type="evidence" value="ECO:0007669"/>
    <property type="project" value="TreeGrafter"/>
</dbReference>
<dbReference type="GO" id="GO:0007189">
    <property type="term" value="P:adenylate cyclase-activating G protein-coupled receptor signaling pathway"/>
    <property type="evidence" value="ECO:0007669"/>
    <property type="project" value="TreeGrafter"/>
</dbReference>
<dbReference type="GO" id="GO:0009755">
    <property type="term" value="P:hormone-mediated signaling pathway"/>
    <property type="evidence" value="ECO:0007669"/>
    <property type="project" value="TreeGrafter"/>
</dbReference>
<dbReference type="CDD" id="cd15137">
    <property type="entry name" value="7tmA_Relaxin_R"/>
    <property type="match status" value="1"/>
</dbReference>
<dbReference type="CDD" id="cd00112">
    <property type="entry name" value="LDLa"/>
    <property type="match status" value="10"/>
</dbReference>
<dbReference type="FunFam" id="1.20.1070.10:FF:000333">
    <property type="entry name" value="Relaxin receptor 1"/>
    <property type="match status" value="1"/>
</dbReference>
<dbReference type="FunFam" id="4.10.400.10:FF:000065">
    <property type="entry name" value="Transmembrane protease serine 7"/>
    <property type="match status" value="1"/>
</dbReference>
<dbReference type="Gene3D" id="4.10.400.10">
    <property type="entry name" value="Low-density Lipoprotein Receptor"/>
    <property type="match status" value="12"/>
</dbReference>
<dbReference type="Gene3D" id="1.20.1070.10">
    <property type="entry name" value="Rhodopsin 7-helix transmembrane proteins"/>
    <property type="match status" value="1"/>
</dbReference>
<dbReference type="Gene3D" id="3.80.10.10">
    <property type="entry name" value="Ribonuclease Inhibitor"/>
    <property type="match status" value="1"/>
</dbReference>
<dbReference type="InterPro" id="IPR000276">
    <property type="entry name" value="GPCR_Rhodpsn"/>
</dbReference>
<dbReference type="InterPro" id="IPR017452">
    <property type="entry name" value="GPCR_Rhodpsn_7TM"/>
</dbReference>
<dbReference type="InterPro" id="IPR036055">
    <property type="entry name" value="LDL_receptor-like_sf"/>
</dbReference>
<dbReference type="InterPro" id="IPR023415">
    <property type="entry name" value="LDLR_class-A_CS"/>
</dbReference>
<dbReference type="InterPro" id="IPR002172">
    <property type="entry name" value="LDrepeatLR_classA_rpt"/>
</dbReference>
<dbReference type="InterPro" id="IPR001611">
    <property type="entry name" value="Leu-rich_rpt"/>
</dbReference>
<dbReference type="InterPro" id="IPR003591">
    <property type="entry name" value="Leu-rich_rpt_typical-subtyp"/>
</dbReference>
<dbReference type="InterPro" id="IPR032675">
    <property type="entry name" value="LRR_dom_sf"/>
</dbReference>
<dbReference type="InterPro" id="IPR000372">
    <property type="entry name" value="LRRNT"/>
</dbReference>
<dbReference type="PANTHER" id="PTHR24372:SF77">
    <property type="entry name" value="G-PROTEIN COUPLED RECEPTORS FAMILY 1 PROFILE DOMAIN-CONTAINING PROTEIN"/>
    <property type="match status" value="1"/>
</dbReference>
<dbReference type="PANTHER" id="PTHR24372">
    <property type="entry name" value="GLYCOPROTEIN HORMONE RECEPTOR"/>
    <property type="match status" value="1"/>
</dbReference>
<dbReference type="Pfam" id="PF00001">
    <property type="entry name" value="7tm_1"/>
    <property type="match status" value="1"/>
</dbReference>
<dbReference type="Pfam" id="PF00057">
    <property type="entry name" value="Ldl_recept_a"/>
    <property type="match status" value="6"/>
</dbReference>
<dbReference type="Pfam" id="PF00560">
    <property type="entry name" value="LRR_1"/>
    <property type="match status" value="1"/>
</dbReference>
<dbReference type="Pfam" id="PF13855">
    <property type="entry name" value="LRR_8"/>
    <property type="match status" value="1"/>
</dbReference>
<dbReference type="PRINTS" id="PR00261">
    <property type="entry name" value="LDLRECEPTOR"/>
</dbReference>
<dbReference type="SMART" id="SM00192">
    <property type="entry name" value="LDLa"/>
    <property type="match status" value="12"/>
</dbReference>
<dbReference type="SMART" id="SM00369">
    <property type="entry name" value="LRR_TYP"/>
    <property type="match status" value="6"/>
</dbReference>
<dbReference type="SMART" id="SM00013">
    <property type="entry name" value="LRRNT"/>
    <property type="match status" value="1"/>
</dbReference>
<dbReference type="SUPFAM" id="SSF81321">
    <property type="entry name" value="Family A G protein-coupled receptor-like"/>
    <property type="match status" value="1"/>
</dbReference>
<dbReference type="SUPFAM" id="SSF52058">
    <property type="entry name" value="L domain-like"/>
    <property type="match status" value="1"/>
</dbReference>
<dbReference type="SUPFAM" id="SSF57424">
    <property type="entry name" value="LDL receptor-like module"/>
    <property type="match status" value="9"/>
</dbReference>
<dbReference type="PROSITE" id="PS50262">
    <property type="entry name" value="G_PROTEIN_RECEP_F1_2"/>
    <property type="match status" value="1"/>
</dbReference>
<dbReference type="PROSITE" id="PS01209">
    <property type="entry name" value="LDLRA_1"/>
    <property type="match status" value="7"/>
</dbReference>
<dbReference type="PROSITE" id="PS50068">
    <property type="entry name" value="LDLRA_2"/>
    <property type="match status" value="11"/>
</dbReference>
<dbReference type="PROSITE" id="PS51450">
    <property type="entry name" value="LRR"/>
    <property type="match status" value="6"/>
</dbReference>
<comment type="function">
    <text>Might directly transduce signals carried by large extracellular lipoprotein complexes into neuronal events.</text>
</comment>
<comment type="subcellular location">
    <subcellularLocation>
        <location>Cell membrane</location>
        <topology>Multi-pass membrane protein</topology>
    </subcellularLocation>
</comment>
<comment type="tissue specificity">
    <text>Predominantly expressed in a small number of neurons within the central nervous system and to a lesser extent in the heart.</text>
</comment>
<comment type="similarity">
    <text evidence="4">Belongs to the G-protein coupled receptor 1 family.</text>
</comment>
<keyword id="KW-1003">Cell membrane</keyword>
<keyword id="KW-1015">Disulfide bond</keyword>
<keyword id="KW-0297">G-protein coupled receptor</keyword>
<keyword id="KW-0325">Glycoprotein</keyword>
<keyword id="KW-0433">Leucine-rich repeat</keyword>
<keyword id="KW-0472">Membrane</keyword>
<keyword id="KW-0675">Receptor</keyword>
<keyword id="KW-0677">Repeat</keyword>
<keyword id="KW-0732">Signal</keyword>
<keyword id="KW-0807">Transducer</keyword>
<keyword id="KW-0812">Transmembrane</keyword>
<keyword id="KW-1133">Transmembrane helix</keyword>
<protein>
    <recommendedName>
        <fullName>G-protein coupled receptor GRL101</fullName>
    </recommendedName>
</protein>
<accession>P46023</accession>
<organism>
    <name type="scientific">Lymnaea stagnalis</name>
    <name type="common">Great pond snail</name>
    <name type="synonym">Helix stagnalis</name>
    <dbReference type="NCBI Taxonomy" id="6523"/>
    <lineage>
        <taxon>Eukaryota</taxon>
        <taxon>Metazoa</taxon>
        <taxon>Spiralia</taxon>
        <taxon>Lophotrochozoa</taxon>
        <taxon>Mollusca</taxon>
        <taxon>Gastropoda</taxon>
        <taxon>Heterobranchia</taxon>
        <taxon>Euthyneura</taxon>
        <taxon>Panpulmonata</taxon>
        <taxon>Hygrophila</taxon>
        <taxon>Lymnaeoidea</taxon>
        <taxon>Lymnaeidae</taxon>
        <taxon>Lymnaea</taxon>
    </lineage>
</organism>
<name>GR101_LYMST</name>
<evidence type="ECO:0000250" key="1"/>
<evidence type="ECO:0000255" key="2"/>
<evidence type="ECO:0000255" key="3">
    <source>
        <dbReference type="PROSITE-ProRule" id="PRU00124"/>
    </source>
</evidence>
<evidence type="ECO:0000255" key="4">
    <source>
        <dbReference type="PROSITE-ProRule" id="PRU00521"/>
    </source>
</evidence>
<reference key="1">
    <citation type="journal article" date="1994" name="Proc. Natl. Acad. Sci. U.S.A.">
        <title>A G protein-coupled receptor with low density lipoprotein-binding motifs suggests a role for lipoproteins in G-linked signal transduction.</title>
        <authorList>
            <person name="Tensen C.P."/>
            <person name="van Kesteren E.R."/>
            <person name="Planta R.J."/>
            <person name="Cox K.J.A."/>
            <person name="Burke J.F."/>
            <person name="van Heerikhuizen H."/>
            <person name="Vreugdenhil E."/>
        </authorList>
    </citation>
    <scope>NUCLEOTIDE SEQUENCE [MRNA]</scope>
    <source>
        <tissue>CNS</tissue>
    </source>
</reference>